<proteinExistence type="evidence at transcript level"/>
<keyword id="KW-0413">Isomerase</keyword>
<keyword id="KW-0539">Nucleus</keyword>
<keyword id="KW-1185">Reference proteome</keyword>
<keyword id="KW-0687">Ribonucleoprotein</keyword>
<keyword id="KW-0690">Ribosome biogenesis</keyword>
<keyword id="KW-0694">RNA-binding</keyword>
<keyword id="KW-0698">rRNA processing</keyword>
<comment type="function">
    <text evidence="1 6">Catalytic subunit of H/ACA small nucleolar ribonucleoprotein (H/ACA snoRNP) complex, which catalyzes pseudouridylation of rRNA (PubMed:32554502). This involves the isomerization of uridine such that the ribose is subsequently attached to C5, instead of the normal N1 (By similarity). Pseudouridine ('psi') residues may serve to stabilize the conformation of rRNAs (By similarity). Required for ribosome biogenesis and telomere maintenance (By similarity).</text>
</comment>
<comment type="catalytic activity">
    <reaction evidence="1">
        <text>uridine in 5S rRNA = pseudouridine in 5S rRNA</text>
        <dbReference type="Rhea" id="RHEA:47036"/>
        <dbReference type="Rhea" id="RHEA-COMP:11730"/>
        <dbReference type="Rhea" id="RHEA-COMP:11731"/>
        <dbReference type="ChEBI" id="CHEBI:65314"/>
        <dbReference type="ChEBI" id="CHEBI:65315"/>
    </reaction>
</comment>
<comment type="subunit">
    <text evidence="1">Part of the H/ACA small nucleolar ribonucleoprotein (H/ACA snoRNP) complex. The complex binds a box H/ACA small nucleolar RNA (snoRNA), which may target the specific site of modification within the RNA substrate.</text>
</comment>
<comment type="subcellular location">
    <subcellularLocation>
        <location evidence="1">Nucleus</location>
        <location evidence="1">Nucleolus</location>
    </subcellularLocation>
    <subcellularLocation>
        <location evidence="2">Nucleus</location>
        <location evidence="2">Cajal body</location>
    </subcellularLocation>
</comment>
<comment type="developmental stage">
    <text evidence="6">Ubiquitously expressed up to 12 hpf, with strong expression at the sphere stage. Expression is limited to the proliferative areas of the eyes and optic tecta by 2 dpf.</text>
</comment>
<comment type="disruption phenotype">
    <text evidence="6">Dkc1-deficient larvae have smaller eyes and head compared to wild-type animals, opaque lenses, defective development of the jaw cartilage, bloated fourth ventricle, pericardial edema, and hypoplastic pronephros. Inner-ear development is impaired. Reduced pseudouridylation of 18S rRNA is detected in Dkc1-null larvae at 4 dpf.</text>
</comment>
<comment type="similarity">
    <text evidence="7">Belongs to the pseudouridine synthase TruB family.</text>
</comment>
<reference key="1">
    <citation type="journal article" date="2013" name="Nature">
        <title>The zebrafish reference genome sequence and its relationship to the human genome.</title>
        <authorList>
            <person name="Howe K."/>
            <person name="Clark M.D."/>
            <person name="Torroja C.F."/>
            <person name="Torrance J."/>
            <person name="Berthelot C."/>
            <person name="Muffato M."/>
            <person name="Collins J.E."/>
            <person name="Humphray S."/>
            <person name="McLaren K."/>
            <person name="Matthews L."/>
            <person name="McLaren S."/>
            <person name="Sealy I."/>
            <person name="Caccamo M."/>
            <person name="Churcher C."/>
            <person name="Scott C."/>
            <person name="Barrett J.C."/>
            <person name="Koch R."/>
            <person name="Rauch G.J."/>
            <person name="White S."/>
            <person name="Chow W."/>
            <person name="Kilian B."/>
            <person name="Quintais L.T."/>
            <person name="Guerra-Assuncao J.A."/>
            <person name="Zhou Y."/>
            <person name="Gu Y."/>
            <person name="Yen J."/>
            <person name="Vogel J.H."/>
            <person name="Eyre T."/>
            <person name="Redmond S."/>
            <person name="Banerjee R."/>
            <person name="Chi J."/>
            <person name="Fu B."/>
            <person name="Langley E."/>
            <person name="Maguire S.F."/>
            <person name="Laird G.K."/>
            <person name="Lloyd D."/>
            <person name="Kenyon E."/>
            <person name="Donaldson S."/>
            <person name="Sehra H."/>
            <person name="Almeida-King J."/>
            <person name="Loveland J."/>
            <person name="Trevanion S."/>
            <person name="Jones M."/>
            <person name="Quail M."/>
            <person name="Willey D."/>
            <person name="Hunt A."/>
            <person name="Burton J."/>
            <person name="Sims S."/>
            <person name="McLay K."/>
            <person name="Plumb B."/>
            <person name="Davis J."/>
            <person name="Clee C."/>
            <person name="Oliver K."/>
            <person name="Clark R."/>
            <person name="Riddle C."/>
            <person name="Elliot D."/>
            <person name="Threadgold G."/>
            <person name="Harden G."/>
            <person name="Ware D."/>
            <person name="Begum S."/>
            <person name="Mortimore B."/>
            <person name="Kerry G."/>
            <person name="Heath P."/>
            <person name="Phillimore B."/>
            <person name="Tracey A."/>
            <person name="Corby N."/>
            <person name="Dunn M."/>
            <person name="Johnson C."/>
            <person name="Wood J."/>
            <person name="Clark S."/>
            <person name="Pelan S."/>
            <person name="Griffiths G."/>
            <person name="Smith M."/>
            <person name="Glithero R."/>
            <person name="Howden P."/>
            <person name="Barker N."/>
            <person name="Lloyd C."/>
            <person name="Stevens C."/>
            <person name="Harley J."/>
            <person name="Holt K."/>
            <person name="Panagiotidis G."/>
            <person name="Lovell J."/>
            <person name="Beasley H."/>
            <person name="Henderson C."/>
            <person name="Gordon D."/>
            <person name="Auger K."/>
            <person name="Wright D."/>
            <person name="Collins J."/>
            <person name="Raisen C."/>
            <person name="Dyer L."/>
            <person name="Leung K."/>
            <person name="Robertson L."/>
            <person name="Ambridge K."/>
            <person name="Leongamornlert D."/>
            <person name="McGuire S."/>
            <person name="Gilderthorp R."/>
            <person name="Griffiths C."/>
            <person name="Manthravadi D."/>
            <person name="Nichol S."/>
            <person name="Barker G."/>
            <person name="Whitehead S."/>
            <person name="Kay M."/>
            <person name="Brown J."/>
            <person name="Murnane C."/>
            <person name="Gray E."/>
            <person name="Humphries M."/>
            <person name="Sycamore N."/>
            <person name="Barker D."/>
            <person name="Saunders D."/>
            <person name="Wallis J."/>
            <person name="Babbage A."/>
            <person name="Hammond S."/>
            <person name="Mashreghi-Mohammadi M."/>
            <person name="Barr L."/>
            <person name="Martin S."/>
            <person name="Wray P."/>
            <person name="Ellington A."/>
            <person name="Matthews N."/>
            <person name="Ellwood M."/>
            <person name="Woodmansey R."/>
            <person name="Clark G."/>
            <person name="Cooper J."/>
            <person name="Tromans A."/>
            <person name="Grafham D."/>
            <person name="Skuce C."/>
            <person name="Pandian R."/>
            <person name="Andrews R."/>
            <person name="Harrison E."/>
            <person name="Kimberley A."/>
            <person name="Garnett J."/>
            <person name="Fosker N."/>
            <person name="Hall R."/>
            <person name="Garner P."/>
            <person name="Kelly D."/>
            <person name="Bird C."/>
            <person name="Palmer S."/>
            <person name="Gehring I."/>
            <person name="Berger A."/>
            <person name="Dooley C.M."/>
            <person name="Ersan-Urun Z."/>
            <person name="Eser C."/>
            <person name="Geiger H."/>
            <person name="Geisler M."/>
            <person name="Karotki L."/>
            <person name="Kirn A."/>
            <person name="Konantz J."/>
            <person name="Konantz M."/>
            <person name="Oberlander M."/>
            <person name="Rudolph-Geiger S."/>
            <person name="Teucke M."/>
            <person name="Lanz C."/>
            <person name="Raddatz G."/>
            <person name="Osoegawa K."/>
            <person name="Zhu B."/>
            <person name="Rapp A."/>
            <person name="Widaa S."/>
            <person name="Langford C."/>
            <person name="Yang F."/>
            <person name="Schuster S.C."/>
            <person name="Carter N.P."/>
            <person name="Harrow J."/>
            <person name="Ning Z."/>
            <person name="Herrero J."/>
            <person name="Searle S.M."/>
            <person name="Enright A."/>
            <person name="Geisler R."/>
            <person name="Plasterk R.H."/>
            <person name="Lee C."/>
            <person name="Westerfield M."/>
            <person name="de Jong P.J."/>
            <person name="Zon L.I."/>
            <person name="Postlethwait J.H."/>
            <person name="Nusslein-Volhard C."/>
            <person name="Hubbard T.J."/>
            <person name="Roest Crollius H."/>
            <person name="Rogers J."/>
            <person name="Stemple D.L."/>
        </authorList>
    </citation>
    <scope>NUCLEOTIDE SEQUENCE [LARGE SCALE GENOMIC DNA]</scope>
    <source>
        <strain>Tuebingen</strain>
    </source>
</reference>
<reference key="2">
    <citation type="journal article" date="2020" name="Proc. Natl. Acad. Sci. U.S.A.">
        <title>Pseudouridylation defect due to DKC1 and NOP10 mutations causes nephrotic syndrome with cataracts, hearing impairment, and enterocolitis.</title>
        <authorList>
            <person name="Balogh E."/>
            <person name="Chandler J.C."/>
            <person name="Varga M."/>
            <person name="Tahoun M."/>
            <person name="Menyhard D.K."/>
            <person name="Schay G."/>
            <person name="Goncalves T."/>
            <person name="Hamar R."/>
            <person name="Legradi R."/>
            <person name="Szekeres A."/>
            <person name="Gribouval O."/>
            <person name="Kleta R."/>
            <person name="Stanescu H."/>
            <person name="Bockenhauer D."/>
            <person name="Kerti A."/>
            <person name="Williams H."/>
            <person name="Kinsler V."/>
            <person name="Di W.L."/>
            <person name="Curtis D."/>
            <person name="Kolatsi-Joannou M."/>
            <person name="Hammid H."/>
            <person name="Szocs A."/>
            <person name="Perczel K."/>
            <person name="Maka E."/>
            <person name="Toldi G."/>
            <person name="Sava F."/>
            <person name="Arrondel C."/>
            <person name="Kardos M."/>
            <person name="Fintha A."/>
            <person name="Hossain A."/>
            <person name="D'Arco F."/>
            <person name="Kaliakatsos M."/>
            <person name="Koeglmeier J."/>
            <person name="Mifsud W."/>
            <person name="Moosajee M."/>
            <person name="Faro A."/>
            <person name="Javorszky E."/>
            <person name="Rudas G."/>
            <person name="Saied M.H."/>
            <person name="Marzouk S."/>
            <person name="Kelen K."/>
            <person name="Goetze J."/>
            <person name="Reusz G."/>
            <person name="Tulassay T."/>
            <person name="Dragon F."/>
            <person name="Mollet G."/>
            <person name="Motameny S."/>
            <person name="Thiele H."/>
            <person name="Dorval G."/>
            <person name="Nuernberg P."/>
            <person name="Perczel A."/>
            <person name="Szabo A.J."/>
            <person name="Long D.A."/>
            <person name="Tomita K."/>
            <person name="Antignac C."/>
            <person name="Waters A.M."/>
            <person name="Tory K."/>
        </authorList>
    </citation>
    <scope>DISRUPTION PHENOTYPE</scope>
    <scope>DEVELOPMENTAL STAGE</scope>
    <scope>FUNCTION</scope>
</reference>
<accession>F1Q749</accession>
<accession>A0A8M1N7N6</accession>
<gene>
    <name evidence="8" type="primary">dkc1</name>
    <name evidence="8" type="ORF">zgc:110395</name>
</gene>
<name>DKC1_DANRE</name>
<dbReference type="EC" id="5.4.99.-" evidence="1"/>
<dbReference type="EMBL" id="CR792441">
    <property type="status" value="NOT_ANNOTATED_CDS"/>
    <property type="molecule type" value="Genomic_DNA"/>
</dbReference>
<dbReference type="RefSeq" id="NP_001028279.2">
    <property type="nucleotide sequence ID" value="NM_001033107.2"/>
</dbReference>
<dbReference type="SMR" id="F1Q749"/>
<dbReference type="FunCoup" id="F1Q749">
    <property type="interactions" value="2001"/>
</dbReference>
<dbReference type="STRING" id="7955.ENSDARP00000007628"/>
<dbReference type="PaxDb" id="7955-ENSDARP00000007628"/>
<dbReference type="Ensembl" id="ENSDART00000017176">
    <property type="protein sequence ID" value="ENSDARP00000007628"/>
    <property type="gene ID" value="ENSDARG00000016484"/>
</dbReference>
<dbReference type="GeneID" id="613144"/>
<dbReference type="KEGG" id="dre:613144"/>
<dbReference type="AGR" id="ZFIN:ZDB-GENE-031118-120"/>
<dbReference type="CTD" id="1736"/>
<dbReference type="ZFIN" id="ZDB-GENE-031118-120">
    <property type="gene designation" value="dkc1"/>
</dbReference>
<dbReference type="eggNOG" id="KOG2529">
    <property type="taxonomic scope" value="Eukaryota"/>
</dbReference>
<dbReference type="HOGENOM" id="CLU_032087_3_2_1"/>
<dbReference type="OMA" id="KYGRTNE"/>
<dbReference type="OrthoDB" id="10250002at2759"/>
<dbReference type="PhylomeDB" id="F1Q749"/>
<dbReference type="TreeFam" id="TF300354"/>
<dbReference type="Proteomes" id="UP000000437">
    <property type="component" value="Chromosome 21"/>
</dbReference>
<dbReference type="Bgee" id="ENSDARG00000016484">
    <property type="expression patterns" value="Expressed in gastrula and 29 other cell types or tissues"/>
</dbReference>
<dbReference type="ExpressionAtlas" id="F1Q749">
    <property type="expression patterns" value="baseline and differential"/>
</dbReference>
<dbReference type="GO" id="GO:0031429">
    <property type="term" value="C:box H/ACA snoRNP complex"/>
    <property type="evidence" value="ECO:0000318"/>
    <property type="project" value="GO_Central"/>
</dbReference>
<dbReference type="GO" id="GO:0015030">
    <property type="term" value="C:Cajal body"/>
    <property type="evidence" value="ECO:0007669"/>
    <property type="project" value="UniProtKB-SubCell"/>
</dbReference>
<dbReference type="GO" id="GO:0009982">
    <property type="term" value="F:pseudouridine synthase activity"/>
    <property type="evidence" value="ECO:0000318"/>
    <property type="project" value="GO_Central"/>
</dbReference>
<dbReference type="GO" id="GO:0003723">
    <property type="term" value="F:RNA binding"/>
    <property type="evidence" value="ECO:0007669"/>
    <property type="project" value="UniProtKB-KW"/>
</dbReference>
<dbReference type="GO" id="GO:0000495">
    <property type="term" value="P:box H/ACA sno(s)RNA 3'-end processing"/>
    <property type="evidence" value="ECO:0000318"/>
    <property type="project" value="GO_Central"/>
</dbReference>
<dbReference type="GO" id="GO:0060216">
    <property type="term" value="P:definitive hemopoiesis"/>
    <property type="evidence" value="ECO:0000315"/>
    <property type="project" value="ZFIN"/>
</dbReference>
<dbReference type="GO" id="GO:1990481">
    <property type="term" value="P:mRNA pseudouridine synthesis"/>
    <property type="evidence" value="ECO:0000318"/>
    <property type="project" value="GO_Central"/>
</dbReference>
<dbReference type="GO" id="GO:0006364">
    <property type="term" value="P:rRNA processing"/>
    <property type="evidence" value="ECO:0000315"/>
    <property type="project" value="ZFIN"/>
</dbReference>
<dbReference type="GO" id="GO:0031118">
    <property type="term" value="P:rRNA pseudouridine synthesis"/>
    <property type="evidence" value="ECO:0000318"/>
    <property type="project" value="GO_Central"/>
</dbReference>
<dbReference type="GO" id="GO:0031120">
    <property type="term" value="P:snRNA pseudouridine synthesis"/>
    <property type="evidence" value="ECO:0000318"/>
    <property type="project" value="GO_Central"/>
</dbReference>
<dbReference type="CDD" id="cd02572">
    <property type="entry name" value="PseudoU_synth_hDyskerin"/>
    <property type="match status" value="1"/>
</dbReference>
<dbReference type="CDD" id="cd21148">
    <property type="entry name" value="PUA_Cbf5"/>
    <property type="match status" value="1"/>
</dbReference>
<dbReference type="FunFam" id="3.30.2350.10:FF:000001">
    <property type="entry name" value="H/ACA ribonucleoprotein complex subunit CBF5"/>
    <property type="match status" value="1"/>
</dbReference>
<dbReference type="Gene3D" id="3.30.2350.10">
    <property type="entry name" value="Pseudouridine synthase"/>
    <property type="match status" value="1"/>
</dbReference>
<dbReference type="Gene3D" id="2.30.130.10">
    <property type="entry name" value="PUA domain"/>
    <property type="match status" value="1"/>
</dbReference>
<dbReference type="InterPro" id="IPR012960">
    <property type="entry name" value="Dyskerin-like"/>
</dbReference>
<dbReference type="InterPro" id="IPR020103">
    <property type="entry name" value="PsdUridine_synth_cat_dom_sf"/>
</dbReference>
<dbReference type="InterPro" id="IPR002501">
    <property type="entry name" value="PsdUridine_synth_N"/>
</dbReference>
<dbReference type="InterPro" id="IPR002478">
    <property type="entry name" value="PUA"/>
</dbReference>
<dbReference type="InterPro" id="IPR015947">
    <property type="entry name" value="PUA-like_sf"/>
</dbReference>
<dbReference type="InterPro" id="IPR036974">
    <property type="entry name" value="PUA_sf"/>
</dbReference>
<dbReference type="InterPro" id="IPR004802">
    <property type="entry name" value="tRNA_PsdUridine_synth_B_fam"/>
</dbReference>
<dbReference type="InterPro" id="IPR032819">
    <property type="entry name" value="TruB_C"/>
</dbReference>
<dbReference type="InterPro" id="IPR004521">
    <property type="entry name" value="Uncharacterised_CHP00451"/>
</dbReference>
<dbReference type="NCBIfam" id="TIGR00425">
    <property type="entry name" value="CBF5"/>
    <property type="match status" value="1"/>
</dbReference>
<dbReference type="NCBIfam" id="NF003280">
    <property type="entry name" value="PRK04270.1"/>
    <property type="match status" value="1"/>
</dbReference>
<dbReference type="NCBIfam" id="TIGR00451">
    <property type="entry name" value="unchar_dom_2"/>
    <property type="match status" value="1"/>
</dbReference>
<dbReference type="PANTHER" id="PTHR23127">
    <property type="entry name" value="CENTROMERE/MICROTUBULE BINDING PROTEIN CBF5"/>
    <property type="match status" value="1"/>
</dbReference>
<dbReference type="PANTHER" id="PTHR23127:SF0">
    <property type="entry name" value="H_ACA RIBONUCLEOPROTEIN COMPLEX SUBUNIT DKC1"/>
    <property type="match status" value="1"/>
</dbReference>
<dbReference type="Pfam" id="PF08068">
    <property type="entry name" value="DKCLD"/>
    <property type="match status" value="1"/>
</dbReference>
<dbReference type="Pfam" id="PF01472">
    <property type="entry name" value="PUA"/>
    <property type="match status" value="1"/>
</dbReference>
<dbReference type="Pfam" id="PF16198">
    <property type="entry name" value="TruB_C_2"/>
    <property type="match status" value="1"/>
</dbReference>
<dbReference type="Pfam" id="PF01509">
    <property type="entry name" value="TruB_N"/>
    <property type="match status" value="1"/>
</dbReference>
<dbReference type="SMART" id="SM01136">
    <property type="entry name" value="DKCLD"/>
    <property type="match status" value="1"/>
</dbReference>
<dbReference type="SMART" id="SM00359">
    <property type="entry name" value="PUA"/>
    <property type="match status" value="1"/>
</dbReference>
<dbReference type="SUPFAM" id="SSF55120">
    <property type="entry name" value="Pseudouridine synthase"/>
    <property type="match status" value="1"/>
</dbReference>
<dbReference type="SUPFAM" id="SSF88697">
    <property type="entry name" value="PUA domain-like"/>
    <property type="match status" value="1"/>
</dbReference>
<dbReference type="PROSITE" id="PS50890">
    <property type="entry name" value="PUA"/>
    <property type="match status" value="1"/>
</dbReference>
<feature type="initiator methionine" description="Removed" evidence="1">
    <location>
        <position position="1"/>
    </location>
</feature>
<feature type="chain" id="PRO_0000459661" description="H/ACA ribonucleoprotein complex subunit DKC1" evidence="1">
    <location>
        <begin position="2"/>
        <end position="506"/>
    </location>
</feature>
<feature type="domain" description="PUA" evidence="4">
    <location>
        <begin position="291"/>
        <end position="366"/>
    </location>
</feature>
<feature type="region of interest" description="Disordered" evidence="5">
    <location>
        <begin position="1"/>
        <end position="26"/>
    </location>
</feature>
<feature type="region of interest" description="Disordered" evidence="5">
    <location>
        <begin position="391"/>
        <end position="410"/>
    </location>
</feature>
<feature type="region of interest" description="Disordered" evidence="5">
    <location>
        <begin position="419"/>
        <end position="506"/>
    </location>
</feature>
<feature type="compositionally biased region" description="Basic and acidic residues" evidence="5">
    <location>
        <begin position="421"/>
        <end position="434"/>
    </location>
</feature>
<feature type="compositionally biased region" description="Basic residues" evidence="5">
    <location>
        <begin position="457"/>
        <end position="466"/>
    </location>
</feature>
<feature type="active site" description="Nucleophile" evidence="3">
    <location>
        <position position="120"/>
    </location>
</feature>
<evidence type="ECO:0000250" key="1">
    <source>
        <dbReference type="UniProtKB" id="O60832"/>
    </source>
</evidence>
<evidence type="ECO:0000250" key="2">
    <source>
        <dbReference type="UniProtKB" id="P40615"/>
    </source>
</evidence>
<evidence type="ECO:0000250" key="3">
    <source>
        <dbReference type="UniProtKB" id="P60340"/>
    </source>
</evidence>
<evidence type="ECO:0000255" key="4">
    <source>
        <dbReference type="PROSITE-ProRule" id="PRU00161"/>
    </source>
</evidence>
<evidence type="ECO:0000256" key="5">
    <source>
        <dbReference type="SAM" id="MobiDB-lite"/>
    </source>
</evidence>
<evidence type="ECO:0000269" key="6">
    <source>
    </source>
</evidence>
<evidence type="ECO:0000305" key="7"/>
<evidence type="ECO:0000312" key="8">
    <source>
        <dbReference type="ZFIN" id="ZDB-GENE-031118-120"/>
    </source>
</evidence>
<organism>
    <name type="scientific">Danio rerio</name>
    <name type="common">Zebrafish</name>
    <name type="synonym">Brachydanio rerio</name>
    <dbReference type="NCBI Taxonomy" id="7955"/>
    <lineage>
        <taxon>Eukaryota</taxon>
        <taxon>Metazoa</taxon>
        <taxon>Chordata</taxon>
        <taxon>Craniata</taxon>
        <taxon>Vertebrata</taxon>
        <taxon>Euteleostomi</taxon>
        <taxon>Actinopterygii</taxon>
        <taxon>Neopterygii</taxon>
        <taxon>Teleostei</taxon>
        <taxon>Ostariophysi</taxon>
        <taxon>Cypriniformes</taxon>
        <taxon>Danionidae</taxon>
        <taxon>Danioninae</taxon>
        <taxon>Danio</taxon>
    </lineage>
</organism>
<protein>
    <recommendedName>
        <fullName evidence="1">H/ACA ribonucleoprotein complex subunit DKC1</fullName>
        <ecNumber evidence="1">5.4.99.-</ecNumber>
    </recommendedName>
    <alternativeName>
        <fullName evidence="8">Dyskerin</fullName>
    </alternativeName>
</protein>
<sequence>MADTESKKEKKRKSKKISDEEVGDIQESGDFLIKPESKVASLDTSQWPLLLKNFDKLNIRTAHYTPLPHGSNPLKRGIHDYVRSGFINLDKPANPSSHEVVAWIKRILRVEKTGHSGTLDPKVTGCLIVCVERATRLVKSQQSAGKEYVGIVRLHNALENEHQLARALECLTGALFQRPPLIAAVKRQLRVRTIYESKLIEYDPERRLGIFWVSCEAGTYIRTLCVHLGLLLGVGGQMQELRRVRSGVLGEKDNLVTMHDVLDAQWQFDHNKDETYLRRVIFPLEKLLISHKRIVMKDSAVNAICYGAKIMLPGVLRYEDGIEVNQDIVVITTKGEAICTAVALMTTAVISTCDHGVVAKIKRVIMERDTYPRKWGLGPKASQKKMMIQKGLLDKHGKPNNSTPSDWKEGYVDYSTTKVKKGGEASAKRKRDESGSEGEAAAAAQDTSKTEEESKKEKKKKKKEKKQKLAEEAAAEAPAEEETEVTESAKKKKKKKKAKETEADSD</sequence>